<gene>
    <name evidence="1" type="primary">ureD1</name>
    <name type="ordered locus">PSPTO_2408</name>
</gene>
<feature type="chain" id="PRO_0000346589" description="Urease accessory protein UreD 1">
    <location>
        <begin position="1"/>
        <end position="285"/>
    </location>
</feature>
<proteinExistence type="inferred from homology"/>
<sequence length="285" mass="30429">MNAHSSLLPICKKATAHIAFSKAPSGISYVSRQEVGYPFHLGRTLKLPQDPPGMAAIYLQSCSGGLFAGETLHLQLHAGPHTQVHVSTGAATVAHSMLEQPARQTVTLIAETGALLEYLPMATILFPQARLHSVVNVTLHPNARVMLCDAFCLHVPPGSAGLPGFYRADLHIRCPAGTLLAGDRLALTGADLQRRLPGVSAELQALATFMLVGQDLPVDELKRALRDALRVVPESYLGVSALPNDCGVSVRIMTADAVALRSALHLAWACARQQLTGIAPRVRRK</sequence>
<protein>
    <recommendedName>
        <fullName evidence="1">Urease accessory protein UreD 1</fullName>
    </recommendedName>
</protein>
<organism>
    <name type="scientific">Pseudomonas syringae pv. tomato (strain ATCC BAA-871 / DC3000)</name>
    <dbReference type="NCBI Taxonomy" id="223283"/>
    <lineage>
        <taxon>Bacteria</taxon>
        <taxon>Pseudomonadati</taxon>
        <taxon>Pseudomonadota</taxon>
        <taxon>Gammaproteobacteria</taxon>
        <taxon>Pseudomonadales</taxon>
        <taxon>Pseudomonadaceae</taxon>
        <taxon>Pseudomonas</taxon>
    </lineage>
</organism>
<dbReference type="EMBL" id="AE016853">
    <property type="protein sequence ID" value="AAO55918.1"/>
    <property type="status" value="ALT_INIT"/>
    <property type="molecule type" value="Genomic_DNA"/>
</dbReference>
<dbReference type="RefSeq" id="NP_792223.1">
    <property type="nucleotide sequence ID" value="NC_004578.1"/>
</dbReference>
<dbReference type="RefSeq" id="WP_046464006.1">
    <property type="nucleotide sequence ID" value="NC_004578.1"/>
</dbReference>
<dbReference type="SMR" id="Q883F5"/>
<dbReference type="STRING" id="223283.PSPTO_2408"/>
<dbReference type="DNASU" id="1184060"/>
<dbReference type="GeneID" id="1184060"/>
<dbReference type="KEGG" id="pst:PSPTO_2408"/>
<dbReference type="PATRIC" id="fig|223283.9.peg.2444"/>
<dbReference type="eggNOG" id="COG0829">
    <property type="taxonomic scope" value="Bacteria"/>
</dbReference>
<dbReference type="HOGENOM" id="CLU_056339_1_1_6"/>
<dbReference type="OrthoDB" id="9807968at2"/>
<dbReference type="Proteomes" id="UP000002515">
    <property type="component" value="Chromosome"/>
</dbReference>
<dbReference type="GO" id="GO:0005737">
    <property type="term" value="C:cytoplasm"/>
    <property type="evidence" value="ECO:0007669"/>
    <property type="project" value="UniProtKB-SubCell"/>
</dbReference>
<dbReference type="GO" id="GO:0016151">
    <property type="term" value="F:nickel cation binding"/>
    <property type="evidence" value="ECO:0007669"/>
    <property type="project" value="UniProtKB-UniRule"/>
</dbReference>
<dbReference type="HAMAP" id="MF_01384">
    <property type="entry name" value="UreD"/>
    <property type="match status" value="1"/>
</dbReference>
<dbReference type="InterPro" id="IPR002669">
    <property type="entry name" value="UreD"/>
</dbReference>
<dbReference type="PANTHER" id="PTHR33643">
    <property type="entry name" value="UREASE ACCESSORY PROTEIN D"/>
    <property type="match status" value="1"/>
</dbReference>
<dbReference type="PANTHER" id="PTHR33643:SF1">
    <property type="entry name" value="UREASE ACCESSORY PROTEIN D"/>
    <property type="match status" value="1"/>
</dbReference>
<dbReference type="Pfam" id="PF01774">
    <property type="entry name" value="UreD"/>
    <property type="match status" value="1"/>
</dbReference>
<evidence type="ECO:0000255" key="1">
    <source>
        <dbReference type="HAMAP-Rule" id="MF_01384"/>
    </source>
</evidence>
<evidence type="ECO:0000305" key="2"/>
<reference key="1">
    <citation type="journal article" date="2003" name="Proc. Natl. Acad. Sci. U.S.A.">
        <title>The complete genome sequence of the Arabidopsis and tomato pathogen Pseudomonas syringae pv. tomato DC3000.</title>
        <authorList>
            <person name="Buell C.R."/>
            <person name="Joardar V."/>
            <person name="Lindeberg M."/>
            <person name="Selengut J."/>
            <person name="Paulsen I.T."/>
            <person name="Gwinn M.L."/>
            <person name="Dodson R.J."/>
            <person name="DeBoy R.T."/>
            <person name="Durkin A.S."/>
            <person name="Kolonay J.F."/>
            <person name="Madupu R."/>
            <person name="Daugherty S.C."/>
            <person name="Brinkac L.M."/>
            <person name="Beanan M.J."/>
            <person name="Haft D.H."/>
            <person name="Nelson W.C."/>
            <person name="Davidsen T.M."/>
            <person name="Zafar N."/>
            <person name="Zhou L."/>
            <person name="Liu J."/>
            <person name="Yuan Q."/>
            <person name="Khouri H.M."/>
            <person name="Fedorova N.B."/>
            <person name="Tran B."/>
            <person name="Russell D."/>
            <person name="Berry K.J."/>
            <person name="Utterback T.R."/>
            <person name="Van Aken S.E."/>
            <person name="Feldblyum T.V."/>
            <person name="D'Ascenzo M."/>
            <person name="Deng W.-L."/>
            <person name="Ramos A.R."/>
            <person name="Alfano J.R."/>
            <person name="Cartinhour S."/>
            <person name="Chatterjee A.K."/>
            <person name="Delaney T.P."/>
            <person name="Lazarowitz S.G."/>
            <person name="Martin G.B."/>
            <person name="Schneider D.J."/>
            <person name="Tang X."/>
            <person name="Bender C.L."/>
            <person name="White O."/>
            <person name="Fraser C.M."/>
            <person name="Collmer A."/>
        </authorList>
    </citation>
    <scope>NUCLEOTIDE SEQUENCE [LARGE SCALE GENOMIC DNA]</scope>
    <source>
        <strain>ATCC BAA-871 / DC3000</strain>
    </source>
</reference>
<name>URED1_PSESM</name>
<comment type="function">
    <text evidence="1">Required for maturation of urease via the functional incorporation of the urease nickel metallocenter.</text>
</comment>
<comment type="subunit">
    <text evidence="1">UreD, UreF and UreG form a complex that acts as a GTP-hydrolysis-dependent molecular chaperone, activating the urease apoprotein by helping to assemble the nickel containing metallocenter of UreC. The UreE protein probably delivers the nickel.</text>
</comment>
<comment type="subcellular location">
    <subcellularLocation>
        <location evidence="1">Cytoplasm</location>
    </subcellularLocation>
</comment>
<comment type="similarity">
    <text evidence="1">Belongs to the UreD family.</text>
</comment>
<comment type="sequence caution" evidence="2">
    <conflict type="erroneous initiation">
        <sequence resource="EMBL-CDS" id="AAO55918"/>
    </conflict>
</comment>
<keyword id="KW-0143">Chaperone</keyword>
<keyword id="KW-0963">Cytoplasm</keyword>
<keyword id="KW-0996">Nickel insertion</keyword>
<keyword id="KW-1185">Reference proteome</keyword>
<accession>Q883F5</accession>